<dbReference type="EMBL" id="DA141208">
    <property type="status" value="NOT_ANNOTATED_CDS"/>
    <property type="molecule type" value="mRNA"/>
</dbReference>
<dbReference type="EMBL" id="AC004616">
    <property type="status" value="NOT_ANNOTATED_CDS"/>
    <property type="molecule type" value="Genomic_DNA"/>
</dbReference>
<dbReference type="EMBL" id="CH471074">
    <property type="protein sequence ID" value="EAW98723.1"/>
    <property type="molecule type" value="Genomic_DNA"/>
</dbReference>
<dbReference type="EMBL" id="AA662182">
    <property type="status" value="NOT_ANNOTATED_CDS"/>
    <property type="molecule type" value="mRNA"/>
</dbReference>
<dbReference type="GlyGen" id="A6NGU7">
    <property type="glycosylation" value="1 site, 1 O-linked glycan (1 site)"/>
</dbReference>
<dbReference type="iPTMnet" id="A6NGU7"/>
<dbReference type="BioMuta" id="HGNC:27336"/>
<dbReference type="MassIVE" id="A6NGU7"/>
<dbReference type="AGR" id="HGNC:27336"/>
<dbReference type="GeneCards" id="LINC01546"/>
<dbReference type="HGNC" id="HGNC:27336">
    <property type="gene designation" value="LINC01546"/>
</dbReference>
<dbReference type="neXtProt" id="NX_A6NGU7"/>
<dbReference type="InParanoid" id="A6NGU7"/>
<dbReference type="PAN-GO" id="A6NGU7">
    <property type="GO annotations" value="0 GO annotations based on evolutionary models"/>
</dbReference>
<dbReference type="Pharos" id="A6NGU7">
    <property type="development level" value="Tdark"/>
</dbReference>
<dbReference type="Proteomes" id="UP000005640">
    <property type="component" value="Unplaced"/>
</dbReference>
<dbReference type="RNAct" id="A6NGU7">
    <property type="molecule type" value="protein"/>
</dbReference>
<proteinExistence type="uncertain"/>
<feature type="chain" id="PRO_0000328970" description="Putative uncharacterized protein encoded by LINC01546">
    <location>
        <begin position="1"/>
        <end position="62"/>
    </location>
</feature>
<feature type="region of interest" description="Disordered" evidence="1">
    <location>
        <begin position="1"/>
        <end position="26"/>
    </location>
</feature>
<feature type="compositionally biased region" description="Basic and acidic residues" evidence="1">
    <location>
        <begin position="17"/>
        <end position="26"/>
    </location>
</feature>
<feature type="splice variant" id="VSP_032859" description="In isoform 2." evidence="2">
    <original>LCRRIKE</original>
    <variation>QEGSHLQTKRRVLSRPWICWHPDLGLPASRTMRN</variation>
    <location>
        <begin position="56"/>
        <end position="62"/>
    </location>
</feature>
<gene>
    <name evidence="4" type="primary">LINC01546</name>
    <name evidence="4" type="synonym">CXorf28</name>
</gene>
<accession>A6NGU7</accession>
<reference key="1">
    <citation type="journal article" date="2004" name="Nat. Genet.">
        <title>Complete sequencing and characterization of 21,243 full-length human cDNAs.</title>
        <authorList>
            <person name="Ota T."/>
            <person name="Suzuki Y."/>
            <person name="Nishikawa T."/>
            <person name="Otsuki T."/>
            <person name="Sugiyama T."/>
            <person name="Irie R."/>
            <person name="Wakamatsu A."/>
            <person name="Hayashi K."/>
            <person name="Sato H."/>
            <person name="Nagai K."/>
            <person name="Kimura K."/>
            <person name="Makita H."/>
            <person name="Sekine M."/>
            <person name="Obayashi M."/>
            <person name="Nishi T."/>
            <person name="Shibahara T."/>
            <person name="Tanaka T."/>
            <person name="Ishii S."/>
            <person name="Yamamoto J."/>
            <person name="Saito K."/>
            <person name="Kawai Y."/>
            <person name="Isono Y."/>
            <person name="Nakamura Y."/>
            <person name="Nagahari K."/>
            <person name="Murakami K."/>
            <person name="Yasuda T."/>
            <person name="Iwayanagi T."/>
            <person name="Wagatsuma M."/>
            <person name="Shiratori A."/>
            <person name="Sudo H."/>
            <person name="Hosoiri T."/>
            <person name="Kaku Y."/>
            <person name="Kodaira H."/>
            <person name="Kondo H."/>
            <person name="Sugawara M."/>
            <person name="Takahashi M."/>
            <person name="Kanda K."/>
            <person name="Yokoi T."/>
            <person name="Furuya T."/>
            <person name="Kikkawa E."/>
            <person name="Omura Y."/>
            <person name="Abe K."/>
            <person name="Kamihara K."/>
            <person name="Katsuta N."/>
            <person name="Sato K."/>
            <person name="Tanikawa M."/>
            <person name="Yamazaki M."/>
            <person name="Ninomiya K."/>
            <person name="Ishibashi T."/>
            <person name="Yamashita H."/>
            <person name="Murakawa K."/>
            <person name="Fujimori K."/>
            <person name="Tanai H."/>
            <person name="Kimata M."/>
            <person name="Watanabe M."/>
            <person name="Hiraoka S."/>
            <person name="Chiba Y."/>
            <person name="Ishida S."/>
            <person name="Ono Y."/>
            <person name="Takiguchi S."/>
            <person name="Watanabe S."/>
            <person name="Yosida M."/>
            <person name="Hotuta T."/>
            <person name="Kusano J."/>
            <person name="Kanehori K."/>
            <person name="Takahashi-Fujii A."/>
            <person name="Hara H."/>
            <person name="Tanase T.-O."/>
            <person name="Nomura Y."/>
            <person name="Togiya S."/>
            <person name="Komai F."/>
            <person name="Hara R."/>
            <person name="Takeuchi K."/>
            <person name="Arita M."/>
            <person name="Imose N."/>
            <person name="Musashino K."/>
            <person name="Yuuki H."/>
            <person name="Oshima A."/>
            <person name="Sasaki N."/>
            <person name="Aotsuka S."/>
            <person name="Yoshikawa Y."/>
            <person name="Matsunawa H."/>
            <person name="Ichihara T."/>
            <person name="Shiohata N."/>
            <person name="Sano S."/>
            <person name="Moriya S."/>
            <person name="Momiyama H."/>
            <person name="Satoh N."/>
            <person name="Takami S."/>
            <person name="Terashima Y."/>
            <person name="Suzuki O."/>
            <person name="Nakagawa S."/>
            <person name="Senoh A."/>
            <person name="Mizoguchi H."/>
            <person name="Goto Y."/>
            <person name="Shimizu F."/>
            <person name="Wakebe H."/>
            <person name="Hishigaki H."/>
            <person name="Watanabe T."/>
            <person name="Sugiyama A."/>
            <person name="Takemoto M."/>
            <person name="Kawakami B."/>
            <person name="Yamazaki M."/>
            <person name="Watanabe K."/>
            <person name="Kumagai A."/>
            <person name="Itakura S."/>
            <person name="Fukuzumi Y."/>
            <person name="Fujimori Y."/>
            <person name="Komiyama M."/>
            <person name="Tashiro H."/>
            <person name="Tanigami A."/>
            <person name="Fujiwara T."/>
            <person name="Ono T."/>
            <person name="Yamada K."/>
            <person name="Fujii Y."/>
            <person name="Ozaki K."/>
            <person name="Hirao M."/>
            <person name="Ohmori Y."/>
            <person name="Kawabata A."/>
            <person name="Hikiji T."/>
            <person name="Kobatake N."/>
            <person name="Inagaki H."/>
            <person name="Ikema Y."/>
            <person name="Okamoto S."/>
            <person name="Okitani R."/>
            <person name="Kawakami T."/>
            <person name="Noguchi S."/>
            <person name="Itoh T."/>
            <person name="Shigeta K."/>
            <person name="Senba T."/>
            <person name="Matsumura K."/>
            <person name="Nakajima Y."/>
            <person name="Mizuno T."/>
            <person name="Morinaga M."/>
            <person name="Sasaki M."/>
            <person name="Togashi T."/>
            <person name="Oyama M."/>
            <person name="Hata H."/>
            <person name="Watanabe M."/>
            <person name="Komatsu T."/>
            <person name="Mizushima-Sugano J."/>
            <person name="Satoh T."/>
            <person name="Shirai Y."/>
            <person name="Takahashi Y."/>
            <person name="Nakagawa K."/>
            <person name="Okumura K."/>
            <person name="Nagase T."/>
            <person name="Nomura N."/>
            <person name="Kikuchi H."/>
            <person name="Masuho Y."/>
            <person name="Yamashita R."/>
            <person name="Nakai K."/>
            <person name="Yada T."/>
            <person name="Nakamura Y."/>
            <person name="Ohara O."/>
            <person name="Isogai T."/>
            <person name="Sugano S."/>
        </authorList>
    </citation>
    <scope>NUCLEOTIDE SEQUENCE [LARGE SCALE MRNA] (ISOFORM 2)</scope>
    <source>
        <tissue>Brain cortex</tissue>
    </source>
</reference>
<reference key="2">
    <citation type="journal article" date="2005" name="Nature">
        <title>The DNA sequence of the human X chromosome.</title>
        <authorList>
            <person name="Ross M.T."/>
            <person name="Grafham D.V."/>
            <person name="Coffey A.J."/>
            <person name="Scherer S."/>
            <person name="McLay K."/>
            <person name="Muzny D."/>
            <person name="Platzer M."/>
            <person name="Howell G.R."/>
            <person name="Burrows C."/>
            <person name="Bird C.P."/>
            <person name="Frankish A."/>
            <person name="Lovell F.L."/>
            <person name="Howe K.L."/>
            <person name="Ashurst J.L."/>
            <person name="Fulton R.S."/>
            <person name="Sudbrak R."/>
            <person name="Wen G."/>
            <person name="Jones M.C."/>
            <person name="Hurles M.E."/>
            <person name="Andrews T.D."/>
            <person name="Scott C.E."/>
            <person name="Searle S."/>
            <person name="Ramser J."/>
            <person name="Whittaker A."/>
            <person name="Deadman R."/>
            <person name="Carter N.P."/>
            <person name="Hunt S.E."/>
            <person name="Chen R."/>
            <person name="Cree A."/>
            <person name="Gunaratne P."/>
            <person name="Havlak P."/>
            <person name="Hodgson A."/>
            <person name="Metzker M.L."/>
            <person name="Richards S."/>
            <person name="Scott G."/>
            <person name="Steffen D."/>
            <person name="Sodergren E."/>
            <person name="Wheeler D.A."/>
            <person name="Worley K.C."/>
            <person name="Ainscough R."/>
            <person name="Ambrose K.D."/>
            <person name="Ansari-Lari M.A."/>
            <person name="Aradhya S."/>
            <person name="Ashwell R.I."/>
            <person name="Babbage A.K."/>
            <person name="Bagguley C.L."/>
            <person name="Ballabio A."/>
            <person name="Banerjee R."/>
            <person name="Barker G.E."/>
            <person name="Barlow K.F."/>
            <person name="Barrett I.P."/>
            <person name="Bates K.N."/>
            <person name="Beare D.M."/>
            <person name="Beasley H."/>
            <person name="Beasley O."/>
            <person name="Beck A."/>
            <person name="Bethel G."/>
            <person name="Blechschmidt K."/>
            <person name="Brady N."/>
            <person name="Bray-Allen S."/>
            <person name="Bridgeman A.M."/>
            <person name="Brown A.J."/>
            <person name="Brown M.J."/>
            <person name="Bonnin D."/>
            <person name="Bruford E.A."/>
            <person name="Buhay C."/>
            <person name="Burch P."/>
            <person name="Burford D."/>
            <person name="Burgess J."/>
            <person name="Burrill W."/>
            <person name="Burton J."/>
            <person name="Bye J.M."/>
            <person name="Carder C."/>
            <person name="Carrel L."/>
            <person name="Chako J."/>
            <person name="Chapman J.C."/>
            <person name="Chavez D."/>
            <person name="Chen E."/>
            <person name="Chen G."/>
            <person name="Chen Y."/>
            <person name="Chen Z."/>
            <person name="Chinault C."/>
            <person name="Ciccodicola A."/>
            <person name="Clark S.Y."/>
            <person name="Clarke G."/>
            <person name="Clee C.M."/>
            <person name="Clegg S."/>
            <person name="Clerc-Blankenburg K."/>
            <person name="Clifford K."/>
            <person name="Cobley V."/>
            <person name="Cole C.G."/>
            <person name="Conquer J.S."/>
            <person name="Corby N."/>
            <person name="Connor R.E."/>
            <person name="David R."/>
            <person name="Davies J."/>
            <person name="Davis C."/>
            <person name="Davis J."/>
            <person name="Delgado O."/>
            <person name="Deshazo D."/>
            <person name="Dhami P."/>
            <person name="Ding Y."/>
            <person name="Dinh H."/>
            <person name="Dodsworth S."/>
            <person name="Draper H."/>
            <person name="Dugan-Rocha S."/>
            <person name="Dunham A."/>
            <person name="Dunn M."/>
            <person name="Durbin K.J."/>
            <person name="Dutta I."/>
            <person name="Eades T."/>
            <person name="Ellwood M."/>
            <person name="Emery-Cohen A."/>
            <person name="Errington H."/>
            <person name="Evans K.L."/>
            <person name="Faulkner L."/>
            <person name="Francis F."/>
            <person name="Frankland J."/>
            <person name="Fraser A.E."/>
            <person name="Galgoczy P."/>
            <person name="Gilbert J."/>
            <person name="Gill R."/>
            <person name="Gloeckner G."/>
            <person name="Gregory S.G."/>
            <person name="Gribble S."/>
            <person name="Griffiths C."/>
            <person name="Grocock R."/>
            <person name="Gu Y."/>
            <person name="Gwilliam R."/>
            <person name="Hamilton C."/>
            <person name="Hart E.A."/>
            <person name="Hawes A."/>
            <person name="Heath P.D."/>
            <person name="Heitmann K."/>
            <person name="Hennig S."/>
            <person name="Hernandez J."/>
            <person name="Hinzmann B."/>
            <person name="Ho S."/>
            <person name="Hoffs M."/>
            <person name="Howden P.J."/>
            <person name="Huckle E.J."/>
            <person name="Hume J."/>
            <person name="Hunt P.J."/>
            <person name="Hunt A.R."/>
            <person name="Isherwood J."/>
            <person name="Jacob L."/>
            <person name="Johnson D."/>
            <person name="Jones S."/>
            <person name="de Jong P.J."/>
            <person name="Joseph S.S."/>
            <person name="Keenan S."/>
            <person name="Kelly S."/>
            <person name="Kershaw J.K."/>
            <person name="Khan Z."/>
            <person name="Kioschis P."/>
            <person name="Klages S."/>
            <person name="Knights A.J."/>
            <person name="Kosiura A."/>
            <person name="Kovar-Smith C."/>
            <person name="Laird G.K."/>
            <person name="Langford C."/>
            <person name="Lawlor S."/>
            <person name="Leversha M."/>
            <person name="Lewis L."/>
            <person name="Liu W."/>
            <person name="Lloyd C."/>
            <person name="Lloyd D.M."/>
            <person name="Loulseged H."/>
            <person name="Loveland J.E."/>
            <person name="Lovell J.D."/>
            <person name="Lozado R."/>
            <person name="Lu J."/>
            <person name="Lyne R."/>
            <person name="Ma J."/>
            <person name="Maheshwari M."/>
            <person name="Matthews L.H."/>
            <person name="McDowall J."/>
            <person name="McLaren S."/>
            <person name="McMurray A."/>
            <person name="Meidl P."/>
            <person name="Meitinger T."/>
            <person name="Milne S."/>
            <person name="Miner G."/>
            <person name="Mistry S.L."/>
            <person name="Morgan M."/>
            <person name="Morris S."/>
            <person name="Mueller I."/>
            <person name="Mullikin J.C."/>
            <person name="Nguyen N."/>
            <person name="Nordsiek G."/>
            <person name="Nyakatura G."/>
            <person name="O'dell C.N."/>
            <person name="Okwuonu G."/>
            <person name="Palmer S."/>
            <person name="Pandian R."/>
            <person name="Parker D."/>
            <person name="Parrish J."/>
            <person name="Pasternak S."/>
            <person name="Patel D."/>
            <person name="Pearce A.V."/>
            <person name="Pearson D.M."/>
            <person name="Pelan S.E."/>
            <person name="Perez L."/>
            <person name="Porter K.M."/>
            <person name="Ramsey Y."/>
            <person name="Reichwald K."/>
            <person name="Rhodes S."/>
            <person name="Ridler K.A."/>
            <person name="Schlessinger D."/>
            <person name="Schueler M.G."/>
            <person name="Sehra H.K."/>
            <person name="Shaw-Smith C."/>
            <person name="Shen H."/>
            <person name="Sheridan E.M."/>
            <person name="Shownkeen R."/>
            <person name="Skuce C.D."/>
            <person name="Smith M.L."/>
            <person name="Sotheran E.C."/>
            <person name="Steingruber H.E."/>
            <person name="Steward C.A."/>
            <person name="Storey R."/>
            <person name="Swann R.M."/>
            <person name="Swarbreck D."/>
            <person name="Tabor P.E."/>
            <person name="Taudien S."/>
            <person name="Taylor T."/>
            <person name="Teague B."/>
            <person name="Thomas K."/>
            <person name="Thorpe A."/>
            <person name="Timms K."/>
            <person name="Tracey A."/>
            <person name="Trevanion S."/>
            <person name="Tromans A.C."/>
            <person name="d'Urso M."/>
            <person name="Verduzco D."/>
            <person name="Villasana D."/>
            <person name="Waldron L."/>
            <person name="Wall M."/>
            <person name="Wang Q."/>
            <person name="Warren J."/>
            <person name="Warry G.L."/>
            <person name="Wei X."/>
            <person name="West A."/>
            <person name="Whitehead S.L."/>
            <person name="Whiteley M.N."/>
            <person name="Wilkinson J.E."/>
            <person name="Willey D.L."/>
            <person name="Williams G."/>
            <person name="Williams L."/>
            <person name="Williamson A."/>
            <person name="Williamson H."/>
            <person name="Wilming L."/>
            <person name="Woodmansey R.L."/>
            <person name="Wray P.W."/>
            <person name="Yen J."/>
            <person name="Zhang J."/>
            <person name="Zhou J."/>
            <person name="Zoghbi H."/>
            <person name="Zorilla S."/>
            <person name="Buck D."/>
            <person name="Reinhardt R."/>
            <person name="Poustka A."/>
            <person name="Rosenthal A."/>
            <person name="Lehrach H."/>
            <person name="Meindl A."/>
            <person name="Minx P.J."/>
            <person name="Hillier L.W."/>
            <person name="Willard H.F."/>
            <person name="Wilson R.K."/>
            <person name="Waterston R.H."/>
            <person name="Rice C.M."/>
            <person name="Vaudin M."/>
            <person name="Coulson A."/>
            <person name="Nelson D.L."/>
            <person name="Weinstock G."/>
            <person name="Sulston J.E."/>
            <person name="Durbin R.M."/>
            <person name="Hubbard T."/>
            <person name="Gibbs R.A."/>
            <person name="Beck S."/>
            <person name="Rogers J."/>
            <person name="Bentley D.R."/>
        </authorList>
    </citation>
    <scope>NUCLEOTIDE SEQUENCE [LARGE SCALE GENOMIC DNA]</scope>
</reference>
<reference key="3">
    <citation type="submission" date="2005-07" db="EMBL/GenBank/DDBJ databases">
        <authorList>
            <person name="Mural R.J."/>
            <person name="Istrail S."/>
            <person name="Sutton G.G."/>
            <person name="Florea L."/>
            <person name="Halpern A.L."/>
            <person name="Mobarry C.M."/>
            <person name="Lippert R."/>
            <person name="Walenz B."/>
            <person name="Shatkay H."/>
            <person name="Dew I."/>
            <person name="Miller J.R."/>
            <person name="Flanigan M.J."/>
            <person name="Edwards N.J."/>
            <person name="Bolanos R."/>
            <person name="Fasulo D."/>
            <person name="Halldorsson B.V."/>
            <person name="Hannenhalli S."/>
            <person name="Turner R."/>
            <person name="Yooseph S."/>
            <person name="Lu F."/>
            <person name="Nusskern D.R."/>
            <person name="Shue B.C."/>
            <person name="Zheng X.H."/>
            <person name="Zhong F."/>
            <person name="Delcher A.L."/>
            <person name="Huson D.H."/>
            <person name="Kravitz S.A."/>
            <person name="Mouchard L."/>
            <person name="Reinert K."/>
            <person name="Remington K.A."/>
            <person name="Clark A.G."/>
            <person name="Waterman M.S."/>
            <person name="Eichler E.E."/>
            <person name="Adams M.D."/>
            <person name="Hunkapiller M.W."/>
            <person name="Myers E.W."/>
            <person name="Venter J.C."/>
        </authorList>
    </citation>
    <scope>NUCLEOTIDE SEQUENCE [LARGE SCALE GENOMIC DNA]</scope>
</reference>
<reference key="4">
    <citation type="journal article" date="2004" name="Genome Res.">
        <title>The status, quality, and expansion of the NIH full-length cDNA project: the Mammalian Gene Collection (MGC).</title>
        <authorList>
            <consortium name="The MGC Project Team"/>
        </authorList>
    </citation>
    <scope>NUCLEOTIDE SEQUENCE [LARGE SCALE MRNA] (ISOFORM 1)</scope>
    <source>
        <tissue>Prostate</tissue>
    </source>
</reference>
<protein>
    <recommendedName>
        <fullName evidence="4">Putative uncharacterized protein encoded by LINC01546</fullName>
    </recommendedName>
</protein>
<keyword id="KW-0025">Alternative splicing</keyword>
<keyword id="KW-1185">Reference proteome</keyword>
<name>CX028_HUMAN</name>
<comment type="alternative products">
    <event type="alternative splicing"/>
    <isoform>
        <id>A6NGU7-1</id>
        <name>1</name>
        <sequence type="displayed"/>
    </isoform>
    <isoform>
        <id>A6NGU7-2</id>
        <name>2</name>
        <sequence type="described" ref="VSP_032859"/>
    </isoform>
</comment>
<comment type="caution">
    <text evidence="3">Product of a dubious CDS prediction. May be a non-coding RNA.</text>
</comment>
<comment type="sequence caution" evidence="3">
    <conflict type="frameshift">
        <sequence resource="EMBL" id="AA662182"/>
    </conflict>
</comment>
<organism>
    <name type="scientific">Homo sapiens</name>
    <name type="common">Human</name>
    <dbReference type="NCBI Taxonomy" id="9606"/>
    <lineage>
        <taxon>Eukaryota</taxon>
        <taxon>Metazoa</taxon>
        <taxon>Chordata</taxon>
        <taxon>Craniata</taxon>
        <taxon>Vertebrata</taxon>
        <taxon>Euteleostomi</taxon>
        <taxon>Mammalia</taxon>
        <taxon>Eutheria</taxon>
        <taxon>Euarchontoglires</taxon>
        <taxon>Primates</taxon>
        <taxon>Haplorrhini</taxon>
        <taxon>Catarrhini</taxon>
        <taxon>Hominidae</taxon>
        <taxon>Homo</taxon>
    </lineage>
</organism>
<evidence type="ECO:0000256" key="1">
    <source>
        <dbReference type="SAM" id="MobiDB-lite"/>
    </source>
</evidence>
<evidence type="ECO:0000303" key="2">
    <source>
    </source>
</evidence>
<evidence type="ECO:0000305" key="3"/>
<evidence type="ECO:0000312" key="4">
    <source>
        <dbReference type="HGNC" id="HGNC:27336"/>
    </source>
</evidence>
<sequence length="62" mass="7222">MGELAASANHGHSPCYPERKGTPGDLSKRKMLVHFYPRRHSHPRATQQWILKNKTLCRRIKE</sequence>